<sequence>MLRGQEERKYSIRKYSIGVVSVLAATMFVVSSHEAQASEKTSTNAAAQKETLNQPGEQGNAITSHQMQSGKQLDDMHKENGKSGTVTEGKDTLQSSKHQSTQNSKTIRTQNDNQVKQDSERQGSKQSHQNNATNNTERQNDQVQNTHHAERNGSQSTTSQSNDVDKSQPSIPAQKVIPNHDKAAPTSTTPPSNDKTAPKSTKAQDATTDKHPNQQDTHQPAHQIIDAKQDDTVRQSEQKPQVGDLSKHIDGQNSPEKPTDKNTDNKQLIKDALQAPKTRSTTNAAADAKKVRPLKANQVQPLNKYPVVFVHGFLGLVGDNAPALYPNYWGGNKFKVIEELRKQGYNVHQASVSAFGSNYDRAVELYYYIKGGRVDYGAAHAAKYGHERYGKTYKGIMPNWEPGKKVHLVGHSMGGQTIRLMEEFLRNGNKEEIAYHKAHGGEISPLFTGGHNNMVASITTLATPHNGSQAADKFGNTEAVRKIMFALNRFMGNKYSNIDLGLTQWGFKQLPNESYIDYIKRVSKSKIWTSDDNAAYDLTLDGSAKLNNMTSMNPNITYTTYTGVSSHTGPLGYENPDLGTFFLMATTSRIIGHDAREEWRKNDGVVPVISSLHPSNQPFVNVTNDEPATRRGIWQVKPIIQGWDHVDFIGVDFLDFKRKGAELANFYTGIINDLLRVEATESKGTQLKAS</sequence>
<evidence type="ECO:0000255" key="1"/>
<evidence type="ECO:0000255" key="2">
    <source>
        <dbReference type="PROSITE-ProRule" id="PRU10037"/>
    </source>
</evidence>
<evidence type="ECO:0000256" key="3">
    <source>
        <dbReference type="SAM" id="MobiDB-lite"/>
    </source>
</evidence>
<evidence type="ECO:0000269" key="4">
    <source>
    </source>
</evidence>
<evidence type="ECO:0000305" key="5"/>
<protein>
    <recommendedName>
        <fullName>Lipase 2</fullName>
        <ecNumber>3.1.1.3</ecNumber>
    </recommendedName>
    <alternativeName>
        <fullName>Glycerol ester hydrolase 2</fullName>
    </alternativeName>
</protein>
<keyword id="KW-0002">3D-structure</keyword>
<keyword id="KW-0378">Hydrolase</keyword>
<keyword id="KW-0442">Lipid degradation</keyword>
<keyword id="KW-0443">Lipid metabolism</keyword>
<keyword id="KW-1185">Reference proteome</keyword>
<keyword id="KW-0964">Secreted</keyword>
<keyword id="KW-0732">Signal</keyword>
<keyword id="KW-0865">Zymogen</keyword>
<organism>
    <name type="scientific">Staphylococcus aureus (strain NCTC 8325 / PS 47)</name>
    <dbReference type="NCBI Taxonomy" id="93061"/>
    <lineage>
        <taxon>Bacteria</taxon>
        <taxon>Bacillati</taxon>
        <taxon>Bacillota</taxon>
        <taxon>Bacilli</taxon>
        <taxon>Bacillales</taxon>
        <taxon>Staphylococcaceae</taxon>
        <taxon>Staphylococcus</taxon>
    </lineage>
</organism>
<comment type="catalytic activity">
    <reaction>
        <text>a triacylglycerol + H2O = a diacylglycerol + a fatty acid + H(+)</text>
        <dbReference type="Rhea" id="RHEA:12044"/>
        <dbReference type="ChEBI" id="CHEBI:15377"/>
        <dbReference type="ChEBI" id="CHEBI:15378"/>
        <dbReference type="ChEBI" id="CHEBI:17855"/>
        <dbReference type="ChEBI" id="CHEBI:18035"/>
        <dbReference type="ChEBI" id="CHEBI:28868"/>
        <dbReference type="EC" id="3.1.1.3"/>
    </reaction>
</comment>
<comment type="subcellular location">
    <subcellularLocation>
        <location evidence="4">Secreted</location>
    </subcellularLocation>
</comment>
<comment type="induction">
    <text evidence="4">Less protein is secreted in a secG or double secG/secY2 mutant (at protein level).</text>
</comment>
<comment type="similarity">
    <text evidence="5">Belongs to the AB hydrolase superfamily. Lipase family.</text>
</comment>
<feature type="signal peptide" evidence="1">
    <location>
        <begin position="1"/>
        <end position="37"/>
    </location>
</feature>
<feature type="chain" id="PRO_0000414598" description="Lipase 2">
    <location>
        <begin position="38"/>
        <end position="690"/>
    </location>
</feature>
<feature type="region of interest" description="Disordered" evidence="3">
    <location>
        <begin position="52"/>
        <end position="266"/>
    </location>
</feature>
<feature type="compositionally biased region" description="Polar residues" evidence="3">
    <location>
        <begin position="52"/>
        <end position="71"/>
    </location>
</feature>
<feature type="compositionally biased region" description="Basic and acidic residues" evidence="3">
    <location>
        <begin position="72"/>
        <end position="81"/>
    </location>
</feature>
<feature type="compositionally biased region" description="Polar residues" evidence="3">
    <location>
        <begin position="82"/>
        <end position="114"/>
    </location>
</feature>
<feature type="compositionally biased region" description="Polar residues" evidence="3">
    <location>
        <begin position="124"/>
        <end position="171"/>
    </location>
</feature>
<feature type="compositionally biased region" description="Polar residues" evidence="3">
    <location>
        <begin position="185"/>
        <end position="206"/>
    </location>
</feature>
<feature type="compositionally biased region" description="Basic and acidic residues" evidence="3">
    <location>
        <begin position="225"/>
        <end position="237"/>
    </location>
</feature>
<feature type="compositionally biased region" description="Basic and acidic residues" evidence="3">
    <location>
        <begin position="257"/>
        <end position="266"/>
    </location>
</feature>
<feature type="active site" description="Charge relay system" evidence="2">
    <location>
        <position position="412"/>
    </location>
</feature>
<feature type="active site" description="Charge relay system" evidence="2">
    <location>
        <position position="645"/>
    </location>
</feature>
<reference key="1">
    <citation type="book" date="2006" name="Gram positive pathogens, 2nd edition">
        <title>The Staphylococcus aureus NCTC 8325 genome.</title>
        <editorList>
            <person name="Fischetti V."/>
            <person name="Novick R."/>
            <person name="Ferretti J."/>
            <person name="Portnoy D."/>
            <person name="Rood J."/>
        </editorList>
        <authorList>
            <person name="Gillaspy A.F."/>
            <person name="Worrell V."/>
            <person name="Orvis J."/>
            <person name="Roe B.A."/>
            <person name="Dyer D.W."/>
            <person name="Iandolo J.J."/>
        </authorList>
    </citation>
    <scope>NUCLEOTIDE SEQUENCE [LARGE SCALE GENOMIC DNA]</scope>
    <source>
        <strain>NCTC 8325 / PS 47</strain>
    </source>
</reference>
<reference key="2">
    <citation type="journal article" date="2010" name="J. Bacteriol.">
        <title>Synthetic effects of secG and secY2 mutations on exoproteome biogenesis in Staphylococcus aureus.</title>
        <authorList>
            <person name="Sibbald M.J."/>
            <person name="Winter T."/>
            <person name="van der Kooi-Pol M.M."/>
            <person name="Buist G."/>
            <person name="Tsompanidou E."/>
            <person name="Bosma T."/>
            <person name="Schafer T."/>
            <person name="Ohlsen K."/>
            <person name="Hecker M."/>
            <person name="Antelmann H."/>
            <person name="Engelmann S."/>
            <person name="van Dijl J.M."/>
        </authorList>
    </citation>
    <scope>IDENTIFICATION BY MASS SPECTROMETRY</scope>
    <scope>SUBCELLULAR LOCATION</scope>
    <scope>INDUCTION</scope>
    <source>
        <strain>RN4220</strain>
    </source>
</reference>
<name>LIP2_STAA8</name>
<proteinExistence type="evidence at protein level"/>
<accession>Q2G155</accession>
<gene>
    <name type="primary">lip2</name>
    <name type="synonym">geh</name>
    <name type="ordered locus">SAOUHSC_00300</name>
</gene>
<dbReference type="EC" id="3.1.1.3"/>
<dbReference type="EMBL" id="CP000253">
    <property type="protein sequence ID" value="ABD29469.1"/>
    <property type="molecule type" value="Genomic_DNA"/>
</dbReference>
<dbReference type="RefSeq" id="WP_000943836.1">
    <property type="nucleotide sequence ID" value="NZ_LS483365.1"/>
</dbReference>
<dbReference type="RefSeq" id="YP_498890.1">
    <property type="nucleotide sequence ID" value="NC_007795.1"/>
</dbReference>
<dbReference type="PDB" id="8S9R">
    <property type="method" value="X-ray"/>
    <property type="resolution" value="2.60 A"/>
    <property type="chains" value="A/B=295-690"/>
</dbReference>
<dbReference type="PDBsum" id="8S9R"/>
<dbReference type="SMR" id="Q2G155"/>
<dbReference type="STRING" id="93061.SAOUHSC_00300"/>
<dbReference type="ESTHER" id="staau-lipas">
    <property type="family name" value="Bacterial_lip_FamI.6"/>
</dbReference>
<dbReference type="PaxDb" id="1280-SAXN108_0305"/>
<dbReference type="GeneID" id="3919527"/>
<dbReference type="KEGG" id="sao:SAOUHSC_00300"/>
<dbReference type="PATRIC" id="fig|93061.5.peg.273"/>
<dbReference type="eggNOG" id="COG1075">
    <property type="taxonomic scope" value="Bacteria"/>
</dbReference>
<dbReference type="eggNOG" id="COG3087">
    <property type="taxonomic scope" value="Bacteria"/>
</dbReference>
<dbReference type="HOGENOM" id="CLU_023555_2_0_9"/>
<dbReference type="OrthoDB" id="2004167at2"/>
<dbReference type="PRO" id="PR:Q2G155"/>
<dbReference type="Proteomes" id="UP000008816">
    <property type="component" value="Chromosome"/>
</dbReference>
<dbReference type="GO" id="GO:0005576">
    <property type="term" value="C:extracellular region"/>
    <property type="evidence" value="ECO:0007669"/>
    <property type="project" value="UniProtKB-SubCell"/>
</dbReference>
<dbReference type="GO" id="GO:0004806">
    <property type="term" value="F:triacylglycerol lipase activity"/>
    <property type="evidence" value="ECO:0007669"/>
    <property type="project" value="UniProtKB-EC"/>
</dbReference>
<dbReference type="GO" id="GO:0016042">
    <property type="term" value="P:lipid catabolic process"/>
    <property type="evidence" value="ECO:0007669"/>
    <property type="project" value="UniProtKB-KW"/>
</dbReference>
<dbReference type="Gene3D" id="3.40.50.1820">
    <property type="entry name" value="alpha/beta hydrolase"/>
    <property type="match status" value="1"/>
</dbReference>
<dbReference type="InterPro" id="IPR029058">
    <property type="entry name" value="AB_hydrolase_fold"/>
</dbReference>
<dbReference type="InterPro" id="IPR056304">
    <property type="entry name" value="Lip-like_C"/>
</dbReference>
<dbReference type="InterPro" id="IPR005877">
    <property type="entry name" value="YSIRK_signal_dom"/>
</dbReference>
<dbReference type="NCBIfam" id="NF047351">
    <property type="entry name" value="lipase_YSIRK_Sa"/>
    <property type="match status" value="1"/>
</dbReference>
<dbReference type="NCBIfam" id="TIGR01168">
    <property type="entry name" value="YSIRK_signal"/>
    <property type="match status" value="1"/>
</dbReference>
<dbReference type="PANTHER" id="PTHR34043">
    <property type="entry name" value="ALPHA/BETA-HYDROLASES SUPERFAMILY PROTEIN"/>
    <property type="match status" value="1"/>
</dbReference>
<dbReference type="PANTHER" id="PTHR34043:SF3">
    <property type="entry name" value="ALPHA_BETA-HYDROLASES SUPERFAMILY PROTEIN"/>
    <property type="match status" value="1"/>
</dbReference>
<dbReference type="Pfam" id="PF24708">
    <property type="entry name" value="Lip_C"/>
    <property type="match status" value="1"/>
</dbReference>
<dbReference type="Pfam" id="PF04650">
    <property type="entry name" value="YSIRK_signal"/>
    <property type="match status" value="1"/>
</dbReference>
<dbReference type="SUPFAM" id="SSF53474">
    <property type="entry name" value="alpha/beta-Hydrolases"/>
    <property type="match status" value="1"/>
</dbReference>
<dbReference type="PROSITE" id="PS00120">
    <property type="entry name" value="LIPASE_SER"/>
    <property type="match status" value="1"/>
</dbReference>